<dbReference type="EC" id="2.3.1.275" evidence="1"/>
<dbReference type="EMBL" id="BA000004">
    <property type="protein sequence ID" value="BAB05358.1"/>
    <property type="molecule type" value="Genomic_DNA"/>
</dbReference>
<dbReference type="PIR" id="G83854">
    <property type="entry name" value="G83854"/>
</dbReference>
<dbReference type="RefSeq" id="WP_010897802.1">
    <property type="nucleotide sequence ID" value="NC_002570.2"/>
</dbReference>
<dbReference type="SMR" id="Q9KCD3"/>
<dbReference type="STRING" id="272558.gene:10727537"/>
<dbReference type="GeneID" id="87597258"/>
<dbReference type="KEGG" id="bha:BH1639"/>
<dbReference type="eggNOG" id="COG0344">
    <property type="taxonomic scope" value="Bacteria"/>
</dbReference>
<dbReference type="HOGENOM" id="CLU_081254_7_1_9"/>
<dbReference type="OrthoDB" id="9777124at2"/>
<dbReference type="UniPathway" id="UPA00085"/>
<dbReference type="Proteomes" id="UP000001258">
    <property type="component" value="Chromosome"/>
</dbReference>
<dbReference type="GO" id="GO:0005886">
    <property type="term" value="C:plasma membrane"/>
    <property type="evidence" value="ECO:0007669"/>
    <property type="project" value="UniProtKB-SubCell"/>
</dbReference>
<dbReference type="GO" id="GO:0043772">
    <property type="term" value="F:acyl-phosphate glycerol-3-phosphate acyltransferase activity"/>
    <property type="evidence" value="ECO:0007669"/>
    <property type="project" value="UniProtKB-UniRule"/>
</dbReference>
<dbReference type="GO" id="GO:0008654">
    <property type="term" value="P:phospholipid biosynthetic process"/>
    <property type="evidence" value="ECO:0007669"/>
    <property type="project" value="UniProtKB-UniRule"/>
</dbReference>
<dbReference type="HAMAP" id="MF_01043">
    <property type="entry name" value="PlsY"/>
    <property type="match status" value="1"/>
</dbReference>
<dbReference type="InterPro" id="IPR003811">
    <property type="entry name" value="G3P_acylTferase_PlsY"/>
</dbReference>
<dbReference type="NCBIfam" id="TIGR00023">
    <property type="entry name" value="glycerol-3-phosphate 1-O-acyltransferase PlsY"/>
    <property type="match status" value="1"/>
</dbReference>
<dbReference type="PANTHER" id="PTHR30309:SF0">
    <property type="entry name" value="GLYCEROL-3-PHOSPHATE ACYLTRANSFERASE-RELATED"/>
    <property type="match status" value="1"/>
</dbReference>
<dbReference type="PANTHER" id="PTHR30309">
    <property type="entry name" value="INNER MEMBRANE PROTEIN YGIH"/>
    <property type="match status" value="1"/>
</dbReference>
<dbReference type="Pfam" id="PF02660">
    <property type="entry name" value="G3P_acyltransf"/>
    <property type="match status" value="1"/>
</dbReference>
<dbReference type="SMART" id="SM01207">
    <property type="entry name" value="G3P_acyltransf"/>
    <property type="match status" value="1"/>
</dbReference>
<protein>
    <recommendedName>
        <fullName evidence="1">Glycerol-3-phosphate acyltransferase</fullName>
    </recommendedName>
    <alternativeName>
        <fullName evidence="1">Acyl-PO4 G3P acyltransferase</fullName>
    </alternativeName>
    <alternativeName>
        <fullName evidence="1">Acyl-phosphate--glycerol-3-phosphate acyltransferase</fullName>
    </alternativeName>
    <alternativeName>
        <fullName evidence="1">G3P acyltransferase</fullName>
        <shortName evidence="1">GPAT</shortName>
        <ecNumber evidence="1">2.3.1.275</ecNumber>
    </alternativeName>
    <alternativeName>
        <fullName evidence="1">Lysophosphatidic acid synthase</fullName>
        <shortName evidence="1">LPA synthase</shortName>
    </alternativeName>
</protein>
<organism>
    <name type="scientific">Halalkalibacterium halodurans (strain ATCC BAA-125 / DSM 18197 / FERM 7344 / JCM 9153 / C-125)</name>
    <name type="common">Bacillus halodurans</name>
    <dbReference type="NCBI Taxonomy" id="272558"/>
    <lineage>
        <taxon>Bacteria</taxon>
        <taxon>Bacillati</taxon>
        <taxon>Bacillota</taxon>
        <taxon>Bacilli</taxon>
        <taxon>Bacillales</taxon>
        <taxon>Bacillaceae</taxon>
        <taxon>Halalkalibacterium (ex Joshi et al. 2022)</taxon>
    </lineage>
</organism>
<proteinExistence type="inferred from homology"/>
<reference key="1">
    <citation type="journal article" date="2000" name="Nucleic Acids Res.">
        <title>Complete genome sequence of the alkaliphilic bacterium Bacillus halodurans and genomic sequence comparison with Bacillus subtilis.</title>
        <authorList>
            <person name="Takami H."/>
            <person name="Nakasone K."/>
            <person name="Takaki Y."/>
            <person name="Maeno G."/>
            <person name="Sasaki R."/>
            <person name="Masui N."/>
            <person name="Fuji F."/>
            <person name="Hirama C."/>
            <person name="Nakamura Y."/>
            <person name="Ogasawara N."/>
            <person name="Kuhara S."/>
            <person name="Horikoshi K."/>
        </authorList>
    </citation>
    <scope>NUCLEOTIDE SEQUENCE [LARGE SCALE GENOMIC DNA]</scope>
    <source>
        <strain>ATCC BAA-125 / DSM 18197 / FERM 7344 / JCM 9153 / C-125</strain>
    </source>
</reference>
<name>PLSY_HALH5</name>
<keyword id="KW-1003">Cell membrane</keyword>
<keyword id="KW-0444">Lipid biosynthesis</keyword>
<keyword id="KW-0443">Lipid metabolism</keyword>
<keyword id="KW-0472">Membrane</keyword>
<keyword id="KW-0594">Phospholipid biosynthesis</keyword>
<keyword id="KW-1208">Phospholipid metabolism</keyword>
<keyword id="KW-1185">Reference proteome</keyword>
<keyword id="KW-0808">Transferase</keyword>
<keyword id="KW-0812">Transmembrane</keyword>
<keyword id="KW-1133">Transmembrane helix</keyword>
<evidence type="ECO:0000255" key="1">
    <source>
        <dbReference type="HAMAP-Rule" id="MF_01043"/>
    </source>
</evidence>
<gene>
    <name evidence="1" type="primary">plsY</name>
    <name type="ordered locus">BH1639</name>
</gene>
<sequence length="206" mass="21890">MELGWLLVIGSYLLGSVSFSYIIAKKIKKVDIRQHGSGNAGATNTLRVLGVGPAVTVLLLDILKGVIAVVVTVQLTPDGDGWFAAAAGIAAIIGHNWPIYYGFRGGKGVATTIGVLASLVPLAAVLAGVIAIGSIVWTRYVSLGSLLFVTLTALLVAVLSQWFGYPVAYIYLTIIVAILSMWRHRSNIQRLLSGTENKLGRKKETT</sequence>
<accession>Q9KCD3</accession>
<comment type="function">
    <text evidence="1">Catalyzes the transfer of an acyl group from acyl-phosphate (acyl-PO(4)) to glycerol-3-phosphate (G3P) to form lysophosphatidic acid (LPA). This enzyme utilizes acyl-phosphate as fatty acyl donor, but not acyl-CoA or acyl-ACP.</text>
</comment>
<comment type="catalytic activity">
    <reaction evidence="1">
        <text>an acyl phosphate + sn-glycerol 3-phosphate = a 1-acyl-sn-glycero-3-phosphate + phosphate</text>
        <dbReference type="Rhea" id="RHEA:34075"/>
        <dbReference type="ChEBI" id="CHEBI:43474"/>
        <dbReference type="ChEBI" id="CHEBI:57597"/>
        <dbReference type="ChEBI" id="CHEBI:57970"/>
        <dbReference type="ChEBI" id="CHEBI:59918"/>
        <dbReference type="EC" id="2.3.1.275"/>
    </reaction>
</comment>
<comment type="pathway">
    <text evidence="1">Lipid metabolism; phospholipid metabolism.</text>
</comment>
<comment type="subunit">
    <text evidence="1">Probably interacts with PlsX.</text>
</comment>
<comment type="subcellular location">
    <subcellularLocation>
        <location evidence="1">Cell membrane</location>
        <topology evidence="1">Multi-pass membrane protein</topology>
    </subcellularLocation>
</comment>
<comment type="similarity">
    <text evidence="1">Belongs to the PlsY family.</text>
</comment>
<feature type="chain" id="PRO_0000188324" description="Glycerol-3-phosphate acyltransferase">
    <location>
        <begin position="1"/>
        <end position="206"/>
    </location>
</feature>
<feature type="transmembrane region" description="Helical" evidence="1">
    <location>
        <begin position="3"/>
        <end position="23"/>
    </location>
</feature>
<feature type="transmembrane region" description="Helical" evidence="1">
    <location>
        <begin position="51"/>
        <end position="71"/>
    </location>
</feature>
<feature type="transmembrane region" description="Helical" evidence="1">
    <location>
        <begin position="83"/>
        <end position="103"/>
    </location>
</feature>
<feature type="transmembrane region" description="Helical" evidence="1">
    <location>
        <begin position="113"/>
        <end position="133"/>
    </location>
</feature>
<feature type="transmembrane region" description="Helical" evidence="1">
    <location>
        <begin position="162"/>
        <end position="182"/>
    </location>
</feature>